<evidence type="ECO:0000256" key="1">
    <source>
        <dbReference type="SAM" id="MobiDB-lite"/>
    </source>
</evidence>
<evidence type="ECO:0000305" key="2"/>
<dbReference type="EMBL" id="AE009949">
    <property type="protein sequence ID" value="AAL97826.1"/>
    <property type="molecule type" value="Genomic_DNA"/>
</dbReference>
<dbReference type="RefSeq" id="WP_002984475.1">
    <property type="nucleotide sequence ID" value="NC_003485.1"/>
</dbReference>
<dbReference type="KEGG" id="spm:spyM18_1213"/>
<dbReference type="HOGENOM" id="CLU_113198_1_1_9"/>
<dbReference type="InterPro" id="IPR005531">
    <property type="entry name" value="Asp23"/>
</dbReference>
<dbReference type="PANTHER" id="PTHR34297:SF3">
    <property type="entry name" value="ALKALINE SHOCK PROTEIN 23"/>
    <property type="match status" value="1"/>
</dbReference>
<dbReference type="PANTHER" id="PTHR34297">
    <property type="entry name" value="HYPOTHETICAL CYTOSOLIC PROTEIN-RELATED"/>
    <property type="match status" value="1"/>
</dbReference>
<dbReference type="Pfam" id="PF03780">
    <property type="entry name" value="Asp23"/>
    <property type="match status" value="1"/>
</dbReference>
<gene>
    <name type="ordered locus">spyM18_1213</name>
</gene>
<name>GLS24_STRP8</name>
<feature type="chain" id="PRO_0000228684" description="Stress response regulator gls24 homolog">
    <location>
        <begin position="1"/>
        <end position="179"/>
    </location>
</feature>
<feature type="region of interest" description="Disordered" evidence="1">
    <location>
        <begin position="147"/>
        <end position="179"/>
    </location>
</feature>
<feature type="compositionally biased region" description="Basic and acidic residues" evidence="1">
    <location>
        <begin position="165"/>
        <end position="179"/>
    </location>
</feature>
<organism>
    <name type="scientific">Streptococcus pyogenes serotype M18 (strain MGAS8232)</name>
    <dbReference type="NCBI Taxonomy" id="186103"/>
    <lineage>
        <taxon>Bacteria</taxon>
        <taxon>Bacillati</taxon>
        <taxon>Bacillota</taxon>
        <taxon>Bacilli</taxon>
        <taxon>Lactobacillales</taxon>
        <taxon>Streptococcaceae</taxon>
        <taxon>Streptococcus</taxon>
    </lineage>
</organism>
<protein>
    <recommendedName>
        <fullName>Stress response regulator gls24 homolog</fullName>
    </recommendedName>
</protein>
<sequence length="179" mass="19944">MTETYIKNTSKDLTSAIRGQLTYDDKVIEKIVGLALENVDGLLGVNGGFFANLKDKLVNTESVRDGVNVEVGKKQVAVDLDIVAEYQKHVPTIYDSIKSIVEEEVKRMTDLDVIEVNVKVVDIKTKEQFEAEKVSLQDKVSDMARSTSEFTSHQVENVKASVDNGVEKLQDQKAEPRVK</sequence>
<reference key="1">
    <citation type="journal article" date="2002" name="Proc. Natl. Acad. Sci. U.S.A.">
        <title>Genome sequence and comparative microarray analysis of serotype M18 group A Streptococcus strains associated with acute rheumatic fever outbreaks.</title>
        <authorList>
            <person name="Smoot J.C."/>
            <person name="Barbian K.D."/>
            <person name="Van Gompel J.J."/>
            <person name="Smoot L.M."/>
            <person name="Chaussee M.S."/>
            <person name="Sylva G.L."/>
            <person name="Sturdevant D.E."/>
            <person name="Ricklefs S.M."/>
            <person name="Porcella S.F."/>
            <person name="Parkins L.D."/>
            <person name="Beres S.B."/>
            <person name="Campbell D.S."/>
            <person name="Smith T.M."/>
            <person name="Zhang Q."/>
            <person name="Kapur V."/>
            <person name="Daly J.A."/>
            <person name="Veasy L.G."/>
            <person name="Musser J.M."/>
        </authorList>
    </citation>
    <scope>NUCLEOTIDE SEQUENCE [LARGE SCALE GENOMIC DNA]</scope>
    <source>
        <strain>MGAS8232</strain>
    </source>
</reference>
<accession>Q7CN70</accession>
<proteinExistence type="inferred from homology"/>
<comment type="similarity">
    <text evidence="2">Belongs to the asp23 family.</text>
</comment>